<dbReference type="EC" id="6.1.1.16" evidence="1"/>
<dbReference type="EMBL" id="CP001277">
    <property type="protein sequence ID" value="ACQ68161.1"/>
    <property type="molecule type" value="Genomic_DNA"/>
</dbReference>
<dbReference type="RefSeq" id="WP_015873929.1">
    <property type="nucleotide sequence ID" value="NC_012751.1"/>
</dbReference>
<dbReference type="SMR" id="C4K6G8"/>
<dbReference type="STRING" id="572265.HDEF_1542"/>
<dbReference type="GeneID" id="66261186"/>
<dbReference type="KEGG" id="hde:HDEF_1542"/>
<dbReference type="eggNOG" id="COG0215">
    <property type="taxonomic scope" value="Bacteria"/>
</dbReference>
<dbReference type="HOGENOM" id="CLU_013528_0_1_6"/>
<dbReference type="Proteomes" id="UP000002334">
    <property type="component" value="Chromosome"/>
</dbReference>
<dbReference type="GO" id="GO:0005829">
    <property type="term" value="C:cytosol"/>
    <property type="evidence" value="ECO:0007669"/>
    <property type="project" value="TreeGrafter"/>
</dbReference>
<dbReference type="GO" id="GO:0005524">
    <property type="term" value="F:ATP binding"/>
    <property type="evidence" value="ECO:0007669"/>
    <property type="project" value="UniProtKB-UniRule"/>
</dbReference>
<dbReference type="GO" id="GO:0004817">
    <property type="term" value="F:cysteine-tRNA ligase activity"/>
    <property type="evidence" value="ECO:0007669"/>
    <property type="project" value="UniProtKB-UniRule"/>
</dbReference>
<dbReference type="GO" id="GO:0008270">
    <property type="term" value="F:zinc ion binding"/>
    <property type="evidence" value="ECO:0007669"/>
    <property type="project" value="UniProtKB-UniRule"/>
</dbReference>
<dbReference type="GO" id="GO:0006423">
    <property type="term" value="P:cysteinyl-tRNA aminoacylation"/>
    <property type="evidence" value="ECO:0007669"/>
    <property type="project" value="UniProtKB-UniRule"/>
</dbReference>
<dbReference type="CDD" id="cd07963">
    <property type="entry name" value="Anticodon_Ia_Cys"/>
    <property type="match status" value="1"/>
</dbReference>
<dbReference type="CDD" id="cd00672">
    <property type="entry name" value="CysRS_core"/>
    <property type="match status" value="1"/>
</dbReference>
<dbReference type="FunFam" id="3.40.50.620:FF:000009">
    <property type="entry name" value="Cysteine--tRNA ligase"/>
    <property type="match status" value="1"/>
</dbReference>
<dbReference type="Gene3D" id="1.20.120.1910">
    <property type="entry name" value="Cysteine-tRNA ligase, C-terminal anti-codon recognition domain"/>
    <property type="match status" value="1"/>
</dbReference>
<dbReference type="Gene3D" id="3.40.50.620">
    <property type="entry name" value="HUPs"/>
    <property type="match status" value="1"/>
</dbReference>
<dbReference type="HAMAP" id="MF_00041">
    <property type="entry name" value="Cys_tRNA_synth"/>
    <property type="match status" value="1"/>
</dbReference>
<dbReference type="InterPro" id="IPR015803">
    <property type="entry name" value="Cys-tRNA-ligase"/>
</dbReference>
<dbReference type="InterPro" id="IPR015273">
    <property type="entry name" value="Cys-tRNA-synt_Ia_DALR"/>
</dbReference>
<dbReference type="InterPro" id="IPR024909">
    <property type="entry name" value="Cys-tRNA/MSH_ligase"/>
</dbReference>
<dbReference type="InterPro" id="IPR056411">
    <property type="entry name" value="CysS_C"/>
</dbReference>
<dbReference type="InterPro" id="IPR014729">
    <property type="entry name" value="Rossmann-like_a/b/a_fold"/>
</dbReference>
<dbReference type="InterPro" id="IPR032678">
    <property type="entry name" value="tRNA-synt_1_cat_dom"/>
</dbReference>
<dbReference type="InterPro" id="IPR009080">
    <property type="entry name" value="tRNAsynth_Ia_anticodon-bd"/>
</dbReference>
<dbReference type="NCBIfam" id="TIGR00435">
    <property type="entry name" value="cysS"/>
    <property type="match status" value="1"/>
</dbReference>
<dbReference type="PANTHER" id="PTHR10890:SF3">
    <property type="entry name" value="CYSTEINE--TRNA LIGASE, CYTOPLASMIC"/>
    <property type="match status" value="1"/>
</dbReference>
<dbReference type="PANTHER" id="PTHR10890">
    <property type="entry name" value="CYSTEINYL-TRNA SYNTHETASE"/>
    <property type="match status" value="1"/>
</dbReference>
<dbReference type="Pfam" id="PF23493">
    <property type="entry name" value="CysS_C"/>
    <property type="match status" value="1"/>
</dbReference>
<dbReference type="Pfam" id="PF09190">
    <property type="entry name" value="DALR_2"/>
    <property type="match status" value="1"/>
</dbReference>
<dbReference type="Pfam" id="PF01406">
    <property type="entry name" value="tRNA-synt_1e"/>
    <property type="match status" value="1"/>
</dbReference>
<dbReference type="PRINTS" id="PR00983">
    <property type="entry name" value="TRNASYNTHCYS"/>
</dbReference>
<dbReference type="SMART" id="SM00840">
    <property type="entry name" value="DALR_2"/>
    <property type="match status" value="1"/>
</dbReference>
<dbReference type="SUPFAM" id="SSF47323">
    <property type="entry name" value="Anticodon-binding domain of a subclass of class I aminoacyl-tRNA synthetases"/>
    <property type="match status" value="1"/>
</dbReference>
<dbReference type="SUPFAM" id="SSF52374">
    <property type="entry name" value="Nucleotidylyl transferase"/>
    <property type="match status" value="1"/>
</dbReference>
<accession>C4K6G8</accession>
<gene>
    <name evidence="1" type="primary">cysS</name>
    <name type="ordered locus">HDEF_1542</name>
</gene>
<sequence>MLKIFNTFNRKKELFTPIHPNTVGMYVCGVTIYDLCHIGHARTFVVFDVVARYLRYLGYSLTYVRNITDIDDKIIQRASQNHQSCEALTAQMLKEMYRDFDELNLLRPDLEPRATEHITEMITLTQQLLDQKYAYVAANGDVLFSVEKNPHYGLLSRQNLEQLQAGARVEVMESKHHPMDFVLWKMSKPNEPHWPSPWGEGRPGWHIECSAMNAKALGPHFDIHGGGADLMFPHHENEMAQSICAHKAPYVNCWMHSGMIMINKEKMSKSLNNFCTIRDLLQRYDPETLRYFLLSAHYRSPLNYTEENLKQARIALTRLYTALRDTNQKAFPEGGESFEKRFVSAMNDDFNTPEAYAVLFDTAREINKLKKEHPKAADGLAAQLRKMGKVLGLLESGSLLSLLNPEKDDRHQSAEIADLIEKRNLARAHKNWEEADNARTRLFEMGVVVEDTENGTNWRRR</sequence>
<protein>
    <recommendedName>
        <fullName evidence="1">Cysteine--tRNA ligase</fullName>
        <ecNumber evidence="1">6.1.1.16</ecNumber>
    </recommendedName>
    <alternativeName>
        <fullName evidence="1">Cysteinyl-tRNA synthetase</fullName>
        <shortName evidence="1">CysRS</shortName>
    </alternativeName>
</protein>
<keyword id="KW-0030">Aminoacyl-tRNA synthetase</keyword>
<keyword id="KW-0067">ATP-binding</keyword>
<keyword id="KW-0963">Cytoplasm</keyword>
<keyword id="KW-0436">Ligase</keyword>
<keyword id="KW-0479">Metal-binding</keyword>
<keyword id="KW-0547">Nucleotide-binding</keyword>
<keyword id="KW-0648">Protein biosynthesis</keyword>
<keyword id="KW-0862">Zinc</keyword>
<reference key="1">
    <citation type="journal article" date="2009" name="Proc. Natl. Acad. Sci. U.S.A.">
        <title>Hamiltonella defensa, genome evolution of protective bacterial endosymbiont from pathogenic ancestors.</title>
        <authorList>
            <person name="Degnan P.H."/>
            <person name="Yu Y."/>
            <person name="Sisneros N."/>
            <person name="Wing R.A."/>
            <person name="Moran N.A."/>
        </authorList>
    </citation>
    <scope>NUCLEOTIDE SEQUENCE [LARGE SCALE GENOMIC DNA]</scope>
    <source>
        <strain>5AT</strain>
    </source>
</reference>
<name>SYC_HAMD5</name>
<evidence type="ECO:0000255" key="1">
    <source>
        <dbReference type="HAMAP-Rule" id="MF_00041"/>
    </source>
</evidence>
<comment type="catalytic activity">
    <reaction evidence="1">
        <text>tRNA(Cys) + L-cysteine + ATP = L-cysteinyl-tRNA(Cys) + AMP + diphosphate</text>
        <dbReference type="Rhea" id="RHEA:17773"/>
        <dbReference type="Rhea" id="RHEA-COMP:9661"/>
        <dbReference type="Rhea" id="RHEA-COMP:9679"/>
        <dbReference type="ChEBI" id="CHEBI:30616"/>
        <dbReference type="ChEBI" id="CHEBI:33019"/>
        <dbReference type="ChEBI" id="CHEBI:35235"/>
        <dbReference type="ChEBI" id="CHEBI:78442"/>
        <dbReference type="ChEBI" id="CHEBI:78517"/>
        <dbReference type="ChEBI" id="CHEBI:456215"/>
        <dbReference type="EC" id="6.1.1.16"/>
    </reaction>
</comment>
<comment type="cofactor">
    <cofactor evidence="1">
        <name>Zn(2+)</name>
        <dbReference type="ChEBI" id="CHEBI:29105"/>
    </cofactor>
    <text evidence="1">Binds 1 zinc ion per subunit.</text>
</comment>
<comment type="subunit">
    <text evidence="1">Monomer.</text>
</comment>
<comment type="subcellular location">
    <subcellularLocation>
        <location evidence="1">Cytoplasm</location>
    </subcellularLocation>
</comment>
<comment type="similarity">
    <text evidence="1">Belongs to the class-I aminoacyl-tRNA synthetase family.</text>
</comment>
<proteinExistence type="inferred from homology"/>
<feature type="chain" id="PRO_1000202126" description="Cysteine--tRNA ligase">
    <location>
        <begin position="1"/>
        <end position="461"/>
    </location>
</feature>
<feature type="short sequence motif" description="'HIGH' region">
    <location>
        <begin position="30"/>
        <end position="40"/>
    </location>
</feature>
<feature type="short sequence motif" description="'KMSKS' region">
    <location>
        <begin position="266"/>
        <end position="270"/>
    </location>
</feature>
<feature type="binding site" evidence="1">
    <location>
        <position position="28"/>
    </location>
    <ligand>
        <name>Zn(2+)</name>
        <dbReference type="ChEBI" id="CHEBI:29105"/>
    </ligand>
</feature>
<feature type="binding site" evidence="1">
    <location>
        <position position="209"/>
    </location>
    <ligand>
        <name>Zn(2+)</name>
        <dbReference type="ChEBI" id="CHEBI:29105"/>
    </ligand>
</feature>
<feature type="binding site" evidence="1">
    <location>
        <position position="234"/>
    </location>
    <ligand>
        <name>Zn(2+)</name>
        <dbReference type="ChEBI" id="CHEBI:29105"/>
    </ligand>
</feature>
<feature type="binding site" evidence="1">
    <location>
        <position position="238"/>
    </location>
    <ligand>
        <name>Zn(2+)</name>
        <dbReference type="ChEBI" id="CHEBI:29105"/>
    </ligand>
</feature>
<feature type="binding site" evidence="1">
    <location>
        <position position="269"/>
    </location>
    <ligand>
        <name>ATP</name>
        <dbReference type="ChEBI" id="CHEBI:30616"/>
    </ligand>
</feature>
<organism>
    <name type="scientific">Hamiltonella defensa subsp. Acyrthosiphon pisum (strain 5AT)</name>
    <dbReference type="NCBI Taxonomy" id="572265"/>
    <lineage>
        <taxon>Bacteria</taxon>
        <taxon>Pseudomonadati</taxon>
        <taxon>Pseudomonadota</taxon>
        <taxon>Gammaproteobacteria</taxon>
        <taxon>Enterobacterales</taxon>
        <taxon>Enterobacteriaceae</taxon>
        <taxon>aphid secondary symbionts</taxon>
        <taxon>Candidatus Hamiltonella</taxon>
    </lineage>
</organism>